<gene>
    <name type="primary">Oaf</name>
    <name type="synonym">D9Ucla1</name>
</gene>
<comment type="similarity">
    <text evidence="2">Belongs to the OAF family.</text>
</comment>
<proteinExistence type="evidence at transcript level"/>
<feature type="signal peptide" evidence="1">
    <location>
        <begin position="1"/>
        <end position="29"/>
    </location>
</feature>
<feature type="chain" id="PRO_0000292428" description="Out at first protein homolog">
    <location>
        <begin position="30"/>
        <end position="282"/>
    </location>
</feature>
<feature type="sequence conflict" description="In Ref. 1; BAE29435." evidence="2" ref="1">
    <original>V</original>
    <variation>A</variation>
    <location>
        <position position="140"/>
    </location>
</feature>
<organism>
    <name type="scientific">Mus musculus</name>
    <name type="common">Mouse</name>
    <dbReference type="NCBI Taxonomy" id="10090"/>
    <lineage>
        <taxon>Eukaryota</taxon>
        <taxon>Metazoa</taxon>
        <taxon>Chordata</taxon>
        <taxon>Craniata</taxon>
        <taxon>Vertebrata</taxon>
        <taxon>Euteleostomi</taxon>
        <taxon>Mammalia</taxon>
        <taxon>Eutheria</taxon>
        <taxon>Euarchontoglires</taxon>
        <taxon>Glires</taxon>
        <taxon>Rodentia</taxon>
        <taxon>Myomorpha</taxon>
        <taxon>Muroidea</taxon>
        <taxon>Muridae</taxon>
        <taxon>Murinae</taxon>
        <taxon>Mus</taxon>
        <taxon>Mus</taxon>
    </lineage>
</organism>
<evidence type="ECO:0000255" key="1"/>
<evidence type="ECO:0000305" key="2"/>
<protein>
    <recommendedName>
        <fullName>Out at first protein homolog</fullName>
    </recommendedName>
</protein>
<reference key="1">
    <citation type="journal article" date="2005" name="Science">
        <title>The transcriptional landscape of the mammalian genome.</title>
        <authorList>
            <person name="Carninci P."/>
            <person name="Kasukawa T."/>
            <person name="Katayama S."/>
            <person name="Gough J."/>
            <person name="Frith M.C."/>
            <person name="Maeda N."/>
            <person name="Oyama R."/>
            <person name="Ravasi T."/>
            <person name="Lenhard B."/>
            <person name="Wells C."/>
            <person name="Kodzius R."/>
            <person name="Shimokawa K."/>
            <person name="Bajic V.B."/>
            <person name="Brenner S.E."/>
            <person name="Batalov S."/>
            <person name="Forrest A.R."/>
            <person name="Zavolan M."/>
            <person name="Davis M.J."/>
            <person name="Wilming L.G."/>
            <person name="Aidinis V."/>
            <person name="Allen J.E."/>
            <person name="Ambesi-Impiombato A."/>
            <person name="Apweiler R."/>
            <person name="Aturaliya R.N."/>
            <person name="Bailey T.L."/>
            <person name="Bansal M."/>
            <person name="Baxter L."/>
            <person name="Beisel K.W."/>
            <person name="Bersano T."/>
            <person name="Bono H."/>
            <person name="Chalk A.M."/>
            <person name="Chiu K.P."/>
            <person name="Choudhary V."/>
            <person name="Christoffels A."/>
            <person name="Clutterbuck D.R."/>
            <person name="Crowe M.L."/>
            <person name="Dalla E."/>
            <person name="Dalrymple B.P."/>
            <person name="de Bono B."/>
            <person name="Della Gatta G."/>
            <person name="di Bernardo D."/>
            <person name="Down T."/>
            <person name="Engstrom P."/>
            <person name="Fagiolini M."/>
            <person name="Faulkner G."/>
            <person name="Fletcher C.F."/>
            <person name="Fukushima T."/>
            <person name="Furuno M."/>
            <person name="Futaki S."/>
            <person name="Gariboldi M."/>
            <person name="Georgii-Hemming P."/>
            <person name="Gingeras T.R."/>
            <person name="Gojobori T."/>
            <person name="Green R.E."/>
            <person name="Gustincich S."/>
            <person name="Harbers M."/>
            <person name="Hayashi Y."/>
            <person name="Hensch T.K."/>
            <person name="Hirokawa N."/>
            <person name="Hill D."/>
            <person name="Huminiecki L."/>
            <person name="Iacono M."/>
            <person name="Ikeo K."/>
            <person name="Iwama A."/>
            <person name="Ishikawa T."/>
            <person name="Jakt M."/>
            <person name="Kanapin A."/>
            <person name="Katoh M."/>
            <person name="Kawasawa Y."/>
            <person name="Kelso J."/>
            <person name="Kitamura H."/>
            <person name="Kitano H."/>
            <person name="Kollias G."/>
            <person name="Krishnan S.P."/>
            <person name="Kruger A."/>
            <person name="Kummerfeld S.K."/>
            <person name="Kurochkin I.V."/>
            <person name="Lareau L.F."/>
            <person name="Lazarevic D."/>
            <person name="Lipovich L."/>
            <person name="Liu J."/>
            <person name="Liuni S."/>
            <person name="McWilliam S."/>
            <person name="Madan Babu M."/>
            <person name="Madera M."/>
            <person name="Marchionni L."/>
            <person name="Matsuda H."/>
            <person name="Matsuzawa S."/>
            <person name="Miki H."/>
            <person name="Mignone F."/>
            <person name="Miyake S."/>
            <person name="Morris K."/>
            <person name="Mottagui-Tabar S."/>
            <person name="Mulder N."/>
            <person name="Nakano N."/>
            <person name="Nakauchi H."/>
            <person name="Ng P."/>
            <person name="Nilsson R."/>
            <person name="Nishiguchi S."/>
            <person name="Nishikawa S."/>
            <person name="Nori F."/>
            <person name="Ohara O."/>
            <person name="Okazaki Y."/>
            <person name="Orlando V."/>
            <person name="Pang K.C."/>
            <person name="Pavan W.J."/>
            <person name="Pavesi G."/>
            <person name="Pesole G."/>
            <person name="Petrovsky N."/>
            <person name="Piazza S."/>
            <person name="Reed J."/>
            <person name="Reid J.F."/>
            <person name="Ring B.Z."/>
            <person name="Ringwald M."/>
            <person name="Rost B."/>
            <person name="Ruan Y."/>
            <person name="Salzberg S.L."/>
            <person name="Sandelin A."/>
            <person name="Schneider C."/>
            <person name="Schoenbach C."/>
            <person name="Sekiguchi K."/>
            <person name="Semple C.A."/>
            <person name="Seno S."/>
            <person name="Sessa L."/>
            <person name="Sheng Y."/>
            <person name="Shibata Y."/>
            <person name="Shimada H."/>
            <person name="Shimada K."/>
            <person name="Silva D."/>
            <person name="Sinclair B."/>
            <person name="Sperling S."/>
            <person name="Stupka E."/>
            <person name="Sugiura K."/>
            <person name="Sultana R."/>
            <person name="Takenaka Y."/>
            <person name="Taki K."/>
            <person name="Tammoja K."/>
            <person name="Tan S.L."/>
            <person name="Tang S."/>
            <person name="Taylor M.S."/>
            <person name="Tegner J."/>
            <person name="Teichmann S.A."/>
            <person name="Ueda H.R."/>
            <person name="van Nimwegen E."/>
            <person name="Verardo R."/>
            <person name="Wei C.L."/>
            <person name="Yagi K."/>
            <person name="Yamanishi H."/>
            <person name="Zabarovsky E."/>
            <person name="Zhu S."/>
            <person name="Zimmer A."/>
            <person name="Hide W."/>
            <person name="Bult C."/>
            <person name="Grimmond S.M."/>
            <person name="Teasdale R.D."/>
            <person name="Liu E.T."/>
            <person name="Brusic V."/>
            <person name="Quackenbush J."/>
            <person name="Wahlestedt C."/>
            <person name="Mattick J.S."/>
            <person name="Hume D.A."/>
            <person name="Kai C."/>
            <person name="Sasaki D."/>
            <person name="Tomaru Y."/>
            <person name="Fukuda S."/>
            <person name="Kanamori-Katayama M."/>
            <person name="Suzuki M."/>
            <person name="Aoki J."/>
            <person name="Arakawa T."/>
            <person name="Iida J."/>
            <person name="Imamura K."/>
            <person name="Itoh M."/>
            <person name="Kato T."/>
            <person name="Kawaji H."/>
            <person name="Kawagashira N."/>
            <person name="Kawashima T."/>
            <person name="Kojima M."/>
            <person name="Kondo S."/>
            <person name="Konno H."/>
            <person name="Nakano K."/>
            <person name="Ninomiya N."/>
            <person name="Nishio T."/>
            <person name="Okada M."/>
            <person name="Plessy C."/>
            <person name="Shibata K."/>
            <person name="Shiraki T."/>
            <person name="Suzuki S."/>
            <person name="Tagami M."/>
            <person name="Waki K."/>
            <person name="Watahiki A."/>
            <person name="Okamura-Oho Y."/>
            <person name="Suzuki H."/>
            <person name="Kawai J."/>
            <person name="Hayashizaki Y."/>
        </authorList>
    </citation>
    <scope>NUCLEOTIDE SEQUENCE [LARGE SCALE MRNA]</scope>
    <source>
        <strain>C57BL/6J</strain>
        <tissue>Bone marrow</tissue>
        <tissue>Spinal ganglion</tissue>
    </source>
</reference>
<reference key="2">
    <citation type="journal article" date="2004" name="Genome Res.">
        <title>The status, quality, and expansion of the NIH full-length cDNA project: the Mammalian Gene Collection (MGC).</title>
        <authorList>
            <consortium name="The MGC Project Team"/>
        </authorList>
    </citation>
    <scope>NUCLEOTIDE SEQUENCE [LARGE SCALE MRNA]</scope>
    <source>
        <strain>FVB/N</strain>
        <tissue>Liver</tissue>
    </source>
</reference>
<dbReference type="EMBL" id="AK051349">
    <property type="protein sequence ID" value="BAC34610.1"/>
    <property type="molecule type" value="mRNA"/>
</dbReference>
<dbReference type="EMBL" id="AK150279">
    <property type="protein sequence ID" value="BAE29435.1"/>
    <property type="molecule type" value="mRNA"/>
</dbReference>
<dbReference type="EMBL" id="BC025514">
    <property type="protein sequence ID" value="AAH25514.1"/>
    <property type="molecule type" value="mRNA"/>
</dbReference>
<dbReference type="EMBL" id="BC026022">
    <property type="protein sequence ID" value="AAH26022.1"/>
    <property type="molecule type" value="mRNA"/>
</dbReference>
<dbReference type="EMBL" id="BC028824">
    <property type="protein sequence ID" value="AAH28824.1"/>
    <property type="molecule type" value="mRNA"/>
</dbReference>
<dbReference type="EMBL" id="BC034836">
    <property type="protein sequence ID" value="AAH34836.1"/>
    <property type="molecule type" value="mRNA"/>
</dbReference>
<dbReference type="CCDS" id="CCDS23091.1"/>
<dbReference type="RefSeq" id="NP_848759.1">
    <property type="nucleotide sequence ID" value="NM_178644.3"/>
</dbReference>
<dbReference type="FunCoup" id="Q8QZR4">
    <property type="interactions" value="382"/>
</dbReference>
<dbReference type="STRING" id="10090.ENSMUSP00000034512"/>
<dbReference type="iPTMnet" id="Q8QZR4"/>
<dbReference type="PhosphoSitePlus" id="Q8QZR4"/>
<dbReference type="SwissPalm" id="Q8QZR4"/>
<dbReference type="CPTAC" id="non-CPTAC-3598"/>
<dbReference type="PaxDb" id="10090-ENSMUSP00000034512"/>
<dbReference type="PeptideAtlas" id="Q8QZR4"/>
<dbReference type="ProteomicsDB" id="287877"/>
<dbReference type="Pumba" id="Q8QZR4"/>
<dbReference type="Antibodypedia" id="49399">
    <property type="antibodies" value="83 antibodies from 21 providers"/>
</dbReference>
<dbReference type="Ensembl" id="ENSMUST00000034512.7">
    <property type="protein sequence ID" value="ENSMUSP00000034512.6"/>
    <property type="gene ID" value="ENSMUSG00000032014.7"/>
</dbReference>
<dbReference type="GeneID" id="102644"/>
<dbReference type="KEGG" id="mmu:102644"/>
<dbReference type="UCSC" id="uc009pbf.1">
    <property type="organism name" value="mouse"/>
</dbReference>
<dbReference type="AGR" id="MGI:94852"/>
<dbReference type="CTD" id="220323"/>
<dbReference type="MGI" id="MGI:94852">
    <property type="gene designation" value="Oaf"/>
</dbReference>
<dbReference type="VEuPathDB" id="HostDB:ENSMUSG00000032014"/>
<dbReference type="eggNOG" id="ENOG502QWDA">
    <property type="taxonomic scope" value="Eukaryota"/>
</dbReference>
<dbReference type="GeneTree" id="ENSGT00390000012008"/>
<dbReference type="HOGENOM" id="CLU_043995_1_0_1"/>
<dbReference type="InParanoid" id="Q8QZR4"/>
<dbReference type="OMA" id="CHYGLSL"/>
<dbReference type="OrthoDB" id="5947176at2759"/>
<dbReference type="PhylomeDB" id="Q8QZR4"/>
<dbReference type="TreeFam" id="TF323953"/>
<dbReference type="BioGRID-ORCS" id="102644">
    <property type="hits" value="1 hit in 77 CRISPR screens"/>
</dbReference>
<dbReference type="ChiTaRS" id="Oaf">
    <property type="organism name" value="mouse"/>
</dbReference>
<dbReference type="PRO" id="PR:Q8QZR4"/>
<dbReference type="Proteomes" id="UP000000589">
    <property type="component" value="Chromosome 9"/>
</dbReference>
<dbReference type="RNAct" id="Q8QZR4">
    <property type="molecule type" value="protein"/>
</dbReference>
<dbReference type="Bgee" id="ENSMUSG00000032014">
    <property type="expression patterns" value="Expressed in left lobe of liver and 186 other cell types or tissues"/>
</dbReference>
<dbReference type="ExpressionAtlas" id="Q8QZR4">
    <property type="expression patterns" value="baseline and differential"/>
</dbReference>
<dbReference type="InterPro" id="IPR026315">
    <property type="entry name" value="Oaf"/>
</dbReference>
<dbReference type="InterPro" id="IPR053897">
    <property type="entry name" value="Oaf_C"/>
</dbReference>
<dbReference type="InterPro" id="IPR053894">
    <property type="entry name" value="OAF_N"/>
</dbReference>
<dbReference type="PANTHER" id="PTHR13423">
    <property type="entry name" value="OUT AT FIRST"/>
    <property type="match status" value="1"/>
</dbReference>
<dbReference type="PANTHER" id="PTHR13423:SF2">
    <property type="entry name" value="OUT AT FIRST PROTEIN HOMOLOG"/>
    <property type="match status" value="1"/>
</dbReference>
<dbReference type="Pfam" id="PF22873">
    <property type="entry name" value="OAF_C"/>
    <property type="match status" value="1"/>
</dbReference>
<dbReference type="Pfam" id="PF14941">
    <property type="entry name" value="OAF_N"/>
    <property type="match status" value="1"/>
</dbReference>
<accession>Q8QZR4</accession>
<accession>Q3UD27</accession>
<name>OAF_MOUSE</name>
<keyword id="KW-1185">Reference proteome</keyword>
<keyword id="KW-0732">Signal</keyword>
<sequence length="282" mass="31524">MRPPGCRDVPSARPALPLLLLLLSPLLLGALHGVGAGSGAPAELRVRVRLPDSQVIEESLQADSDADSISLDLRKPDGTLISFIADFKKDVKIFRALILGELEKGQSQFQALCFVTRLHHNDIIPSEAMAKLRQKNPRAVRQAEEVRGLEQLHMDIAVNFSQGGLLSPHLHNVCAEATDAIYTRQEDVQFWTERGVDSSVFEALPKALEQAELPRCGRVGDRGKPCTCHYSLSLAWYPCMLKYCHSRDRPAPYKCGIRSCRKSYTFDFYVPQKQLCLWDEDP</sequence>